<proteinExistence type="inferred from homology"/>
<sequence length="297" mass="33431">MKRPDYRTLQALDAVIRERGFERAAQKLCITQSAVSQRIKQLENLFGQPLLVRTVPPRPTEQGQKLLALLHQVELLEEEWLGNDTGIDTPLLLSLAVNADSLATWLLPALKPVLTDSPIRLNLQVEDETRTQERLRRGEVVGAVSIQPQPLPSCLVDQLGALDYLFVASKGFAERYFPNGVTRSALLKAPAVAFDHLDDMHQAFLQQNFDLSPGSVPCHIVNSSEAFVQLARQGTTCCMIPHLQIEKELASGELIDLTPGLFQRRMLFWHRFAPESRMMRKVTDALLEHGRQVLRQD</sequence>
<organism>
    <name type="scientific">Serratia proteamaculans (strain 568)</name>
    <dbReference type="NCBI Taxonomy" id="399741"/>
    <lineage>
        <taxon>Bacteria</taxon>
        <taxon>Pseudomonadati</taxon>
        <taxon>Pseudomonadota</taxon>
        <taxon>Gammaproteobacteria</taxon>
        <taxon>Enterobacterales</taxon>
        <taxon>Yersiniaceae</taxon>
        <taxon>Serratia</taxon>
    </lineage>
</organism>
<name>ARGP_SERP5</name>
<reference key="1">
    <citation type="submission" date="2007-09" db="EMBL/GenBank/DDBJ databases">
        <title>Complete sequence of chromosome of Serratia proteamaculans 568.</title>
        <authorList>
            <consortium name="US DOE Joint Genome Institute"/>
            <person name="Copeland A."/>
            <person name="Lucas S."/>
            <person name="Lapidus A."/>
            <person name="Barry K."/>
            <person name="Glavina del Rio T."/>
            <person name="Dalin E."/>
            <person name="Tice H."/>
            <person name="Pitluck S."/>
            <person name="Chain P."/>
            <person name="Malfatti S."/>
            <person name="Shin M."/>
            <person name="Vergez L."/>
            <person name="Schmutz J."/>
            <person name="Larimer F."/>
            <person name="Land M."/>
            <person name="Hauser L."/>
            <person name="Kyrpides N."/>
            <person name="Kim E."/>
            <person name="Taghavi S."/>
            <person name="Newman L."/>
            <person name="Vangronsveld J."/>
            <person name="van der Lelie D."/>
            <person name="Richardson P."/>
        </authorList>
    </citation>
    <scope>NUCLEOTIDE SEQUENCE [LARGE SCALE GENOMIC DNA]</scope>
    <source>
        <strain>568</strain>
    </source>
</reference>
<gene>
    <name evidence="1" type="primary">argP</name>
    <name type="synonym">iciA</name>
    <name type="ordered locus">Spro_3925</name>
</gene>
<evidence type="ECO:0000255" key="1">
    <source>
        <dbReference type="HAMAP-Rule" id="MF_00513"/>
    </source>
</evidence>
<evidence type="ECO:0000305" key="2"/>
<accession>A8GIT0</accession>
<comment type="function">
    <text evidence="1">Controls the transcription of genes involved in arginine and lysine metabolism.</text>
</comment>
<comment type="subunit">
    <text evidence="1">Homodimer.</text>
</comment>
<comment type="similarity">
    <text evidence="2">Belongs to the LysR transcriptional regulatory family.</text>
</comment>
<protein>
    <recommendedName>
        <fullName evidence="1">HTH-type transcriptional regulator ArgP</fullName>
    </recommendedName>
</protein>
<dbReference type="EMBL" id="CP000826">
    <property type="protein sequence ID" value="ABV43020.1"/>
    <property type="molecule type" value="Genomic_DNA"/>
</dbReference>
<dbReference type="SMR" id="A8GIT0"/>
<dbReference type="STRING" id="399741.Spro_3925"/>
<dbReference type="KEGG" id="spe:Spro_3925"/>
<dbReference type="eggNOG" id="COG0583">
    <property type="taxonomic scope" value="Bacteria"/>
</dbReference>
<dbReference type="HOGENOM" id="CLU_063829_0_0_6"/>
<dbReference type="OrthoDB" id="3252676at2"/>
<dbReference type="GO" id="GO:0003677">
    <property type="term" value="F:DNA binding"/>
    <property type="evidence" value="ECO:0007669"/>
    <property type="project" value="UniProtKB-UniRule"/>
</dbReference>
<dbReference type="GO" id="GO:0003700">
    <property type="term" value="F:DNA-binding transcription factor activity"/>
    <property type="evidence" value="ECO:0007669"/>
    <property type="project" value="UniProtKB-UniRule"/>
</dbReference>
<dbReference type="CDD" id="cd08428">
    <property type="entry name" value="PBP2_IciA_ArgP"/>
    <property type="match status" value="1"/>
</dbReference>
<dbReference type="FunFam" id="1.10.10.10:FF:000061">
    <property type="entry name" value="HTH-type transcriptional regulator ArgP"/>
    <property type="match status" value="1"/>
</dbReference>
<dbReference type="FunFam" id="3.40.190.290:FF:000002">
    <property type="entry name" value="HTH-type transcriptional regulator ArgP"/>
    <property type="match status" value="1"/>
</dbReference>
<dbReference type="Gene3D" id="3.40.190.290">
    <property type="match status" value="1"/>
</dbReference>
<dbReference type="Gene3D" id="1.10.10.10">
    <property type="entry name" value="Winged helix-like DNA-binding domain superfamily/Winged helix DNA-binding domain"/>
    <property type="match status" value="1"/>
</dbReference>
<dbReference type="HAMAP" id="MF_00513">
    <property type="entry name" value="HTH_type_ArgP"/>
    <property type="match status" value="1"/>
</dbReference>
<dbReference type="InterPro" id="IPR017685">
    <property type="entry name" value="ArgP"/>
</dbReference>
<dbReference type="InterPro" id="IPR023490">
    <property type="entry name" value="ArgP_gammaproteobact"/>
</dbReference>
<dbReference type="InterPro" id="IPR050176">
    <property type="entry name" value="LTTR"/>
</dbReference>
<dbReference type="InterPro" id="IPR005119">
    <property type="entry name" value="LysR_subst-bd"/>
</dbReference>
<dbReference type="InterPro" id="IPR000847">
    <property type="entry name" value="Tscrpt_reg_HTH_LysR"/>
</dbReference>
<dbReference type="InterPro" id="IPR036388">
    <property type="entry name" value="WH-like_DNA-bd_sf"/>
</dbReference>
<dbReference type="InterPro" id="IPR036390">
    <property type="entry name" value="WH_DNA-bd_sf"/>
</dbReference>
<dbReference type="NCBIfam" id="TIGR03298">
    <property type="entry name" value="argP"/>
    <property type="match status" value="1"/>
</dbReference>
<dbReference type="NCBIfam" id="NF002964">
    <property type="entry name" value="PRK03635.1"/>
    <property type="match status" value="1"/>
</dbReference>
<dbReference type="NCBIfam" id="NF009888">
    <property type="entry name" value="PRK13348.1"/>
    <property type="match status" value="1"/>
</dbReference>
<dbReference type="PANTHER" id="PTHR30579:SF2">
    <property type="entry name" value="HTH-TYPE TRANSCRIPTIONAL REGULATOR ARGP"/>
    <property type="match status" value="1"/>
</dbReference>
<dbReference type="PANTHER" id="PTHR30579">
    <property type="entry name" value="TRANSCRIPTIONAL REGULATOR"/>
    <property type="match status" value="1"/>
</dbReference>
<dbReference type="Pfam" id="PF00126">
    <property type="entry name" value="HTH_1"/>
    <property type="match status" value="1"/>
</dbReference>
<dbReference type="Pfam" id="PF03466">
    <property type="entry name" value="LysR_substrate"/>
    <property type="match status" value="1"/>
</dbReference>
<dbReference type="PRINTS" id="PR00039">
    <property type="entry name" value="HTHLYSR"/>
</dbReference>
<dbReference type="SUPFAM" id="SSF53850">
    <property type="entry name" value="Periplasmic binding protein-like II"/>
    <property type="match status" value="1"/>
</dbReference>
<dbReference type="SUPFAM" id="SSF46785">
    <property type="entry name" value="Winged helix' DNA-binding domain"/>
    <property type="match status" value="1"/>
</dbReference>
<dbReference type="PROSITE" id="PS50931">
    <property type="entry name" value="HTH_LYSR"/>
    <property type="match status" value="1"/>
</dbReference>
<keyword id="KW-0238">DNA-binding</keyword>
<keyword id="KW-0804">Transcription</keyword>
<keyword id="KW-0805">Transcription regulation</keyword>
<feature type="chain" id="PRO_1000060881" description="HTH-type transcriptional regulator ArgP">
    <location>
        <begin position="1"/>
        <end position="297"/>
    </location>
</feature>
<feature type="domain" description="HTH lysR-type" evidence="1">
    <location>
        <begin position="4"/>
        <end position="60"/>
    </location>
</feature>
<feature type="DNA-binding region" description="H-T-H motif" evidence="1">
    <location>
        <begin position="21"/>
        <end position="40"/>
    </location>
</feature>